<sequence length="157" mass="18017">MSRRRGKVEPRHIEGDPKYNDKVISKFINCLMVDGKKSVAESVFYDALEVIAKKTGQDPFAVFQEALENAKPQVEVKSRRVGGVTYQVPIEVRPERRLALGIRWLIKYSRGRNEKSMKNKLAAEFMEAQKGTGSAIKKKEDIRKMADANKAFSHYRW</sequence>
<organism>
    <name type="scientific">Leptospira biflexa serovar Patoc (strain Patoc 1 / Ames)</name>
    <dbReference type="NCBI Taxonomy" id="355278"/>
    <lineage>
        <taxon>Bacteria</taxon>
        <taxon>Pseudomonadati</taxon>
        <taxon>Spirochaetota</taxon>
        <taxon>Spirochaetia</taxon>
        <taxon>Leptospirales</taxon>
        <taxon>Leptospiraceae</taxon>
        <taxon>Leptospira</taxon>
    </lineage>
</organism>
<reference key="1">
    <citation type="journal article" date="2008" name="PLoS ONE">
        <title>Genome sequence of the saprophyte Leptospira biflexa provides insights into the evolution of Leptospira and the pathogenesis of leptospirosis.</title>
        <authorList>
            <person name="Picardeau M."/>
            <person name="Bulach D.M."/>
            <person name="Bouchier C."/>
            <person name="Zuerner R.L."/>
            <person name="Zidane N."/>
            <person name="Wilson P.J."/>
            <person name="Creno S."/>
            <person name="Kuczek E.S."/>
            <person name="Bommezzadri S."/>
            <person name="Davis J.C."/>
            <person name="McGrath A."/>
            <person name="Johnson M.J."/>
            <person name="Boursaux-Eude C."/>
            <person name="Seemann T."/>
            <person name="Rouy Z."/>
            <person name="Coppel R.L."/>
            <person name="Rood J.I."/>
            <person name="Lajus A."/>
            <person name="Davies J.K."/>
            <person name="Medigue C."/>
            <person name="Adler B."/>
        </authorList>
    </citation>
    <scope>NUCLEOTIDE SEQUENCE [LARGE SCALE GENOMIC DNA]</scope>
    <source>
        <strain>Patoc 1 / Ames</strain>
    </source>
</reference>
<name>RS7_LEPBA</name>
<comment type="function">
    <text evidence="1">One of the primary rRNA binding proteins, it binds directly to 16S rRNA where it nucleates assembly of the head domain of the 30S subunit. Is located at the subunit interface close to the decoding center, probably blocks exit of the E-site tRNA.</text>
</comment>
<comment type="subunit">
    <text evidence="1">Part of the 30S ribosomal subunit. Contacts proteins S9 and S11.</text>
</comment>
<comment type="similarity">
    <text evidence="1">Belongs to the universal ribosomal protein uS7 family.</text>
</comment>
<accession>B0SAF8</accession>
<evidence type="ECO:0000255" key="1">
    <source>
        <dbReference type="HAMAP-Rule" id="MF_00480"/>
    </source>
</evidence>
<evidence type="ECO:0000305" key="2"/>
<protein>
    <recommendedName>
        <fullName evidence="1">Small ribosomal subunit protein uS7</fullName>
    </recommendedName>
    <alternativeName>
        <fullName evidence="2">30S ribosomal protein S7</fullName>
    </alternativeName>
</protein>
<feature type="chain" id="PRO_1000125962" description="Small ribosomal subunit protein uS7">
    <location>
        <begin position="1"/>
        <end position="157"/>
    </location>
</feature>
<keyword id="KW-0687">Ribonucleoprotein</keyword>
<keyword id="KW-0689">Ribosomal protein</keyword>
<keyword id="KW-0694">RNA-binding</keyword>
<keyword id="KW-0699">rRNA-binding</keyword>
<keyword id="KW-0820">tRNA-binding</keyword>
<dbReference type="EMBL" id="CP000777">
    <property type="protein sequence ID" value="ABZ94421.1"/>
    <property type="molecule type" value="Genomic_DNA"/>
</dbReference>
<dbReference type="RefSeq" id="WP_012388943.1">
    <property type="nucleotide sequence ID" value="NC_010842.1"/>
</dbReference>
<dbReference type="SMR" id="B0SAF8"/>
<dbReference type="KEGG" id="lbf:LBF_1917"/>
<dbReference type="HOGENOM" id="CLU_072226_1_1_12"/>
<dbReference type="GO" id="GO:0015935">
    <property type="term" value="C:small ribosomal subunit"/>
    <property type="evidence" value="ECO:0007669"/>
    <property type="project" value="InterPro"/>
</dbReference>
<dbReference type="GO" id="GO:0019843">
    <property type="term" value="F:rRNA binding"/>
    <property type="evidence" value="ECO:0007669"/>
    <property type="project" value="UniProtKB-UniRule"/>
</dbReference>
<dbReference type="GO" id="GO:0003735">
    <property type="term" value="F:structural constituent of ribosome"/>
    <property type="evidence" value="ECO:0007669"/>
    <property type="project" value="InterPro"/>
</dbReference>
<dbReference type="GO" id="GO:0000049">
    <property type="term" value="F:tRNA binding"/>
    <property type="evidence" value="ECO:0007669"/>
    <property type="project" value="UniProtKB-UniRule"/>
</dbReference>
<dbReference type="GO" id="GO:0006412">
    <property type="term" value="P:translation"/>
    <property type="evidence" value="ECO:0007669"/>
    <property type="project" value="UniProtKB-UniRule"/>
</dbReference>
<dbReference type="CDD" id="cd14869">
    <property type="entry name" value="uS7_Bacteria"/>
    <property type="match status" value="1"/>
</dbReference>
<dbReference type="FunFam" id="1.10.455.10:FF:000001">
    <property type="entry name" value="30S ribosomal protein S7"/>
    <property type="match status" value="1"/>
</dbReference>
<dbReference type="Gene3D" id="1.10.455.10">
    <property type="entry name" value="Ribosomal protein S7 domain"/>
    <property type="match status" value="1"/>
</dbReference>
<dbReference type="HAMAP" id="MF_00480_B">
    <property type="entry name" value="Ribosomal_uS7_B"/>
    <property type="match status" value="1"/>
</dbReference>
<dbReference type="InterPro" id="IPR000235">
    <property type="entry name" value="Ribosomal_uS7"/>
</dbReference>
<dbReference type="InterPro" id="IPR005717">
    <property type="entry name" value="Ribosomal_uS7_bac/org-type"/>
</dbReference>
<dbReference type="InterPro" id="IPR020606">
    <property type="entry name" value="Ribosomal_uS7_CS"/>
</dbReference>
<dbReference type="InterPro" id="IPR023798">
    <property type="entry name" value="Ribosomal_uS7_dom"/>
</dbReference>
<dbReference type="InterPro" id="IPR036823">
    <property type="entry name" value="Ribosomal_uS7_dom_sf"/>
</dbReference>
<dbReference type="NCBIfam" id="TIGR01029">
    <property type="entry name" value="rpsG_bact"/>
    <property type="match status" value="1"/>
</dbReference>
<dbReference type="PANTHER" id="PTHR11205">
    <property type="entry name" value="RIBOSOMAL PROTEIN S7"/>
    <property type="match status" value="1"/>
</dbReference>
<dbReference type="Pfam" id="PF00177">
    <property type="entry name" value="Ribosomal_S7"/>
    <property type="match status" value="1"/>
</dbReference>
<dbReference type="PIRSF" id="PIRSF002122">
    <property type="entry name" value="RPS7p_RPS7a_RPS5e_RPS7o"/>
    <property type="match status" value="1"/>
</dbReference>
<dbReference type="SUPFAM" id="SSF47973">
    <property type="entry name" value="Ribosomal protein S7"/>
    <property type="match status" value="1"/>
</dbReference>
<dbReference type="PROSITE" id="PS00052">
    <property type="entry name" value="RIBOSOMAL_S7"/>
    <property type="match status" value="1"/>
</dbReference>
<proteinExistence type="inferred from homology"/>
<gene>
    <name evidence="1" type="primary">rpsG</name>
    <name type="ordered locus">LBF_1917</name>
</gene>